<protein>
    <recommendedName>
        <fullName evidence="1">D-ribose pyranase</fullName>
        <ecNumber evidence="1">5.4.99.62</ecNumber>
    </recommendedName>
</protein>
<dbReference type="EC" id="5.4.99.62" evidence="1"/>
<dbReference type="EMBL" id="CP001657">
    <property type="protein sequence ID" value="ACT15252.1"/>
    <property type="molecule type" value="Genomic_DNA"/>
</dbReference>
<dbReference type="RefSeq" id="WP_015842317.1">
    <property type="nucleotide sequence ID" value="NC_012917.1"/>
</dbReference>
<dbReference type="SMR" id="C6DJF3"/>
<dbReference type="STRING" id="561230.PC1_4238"/>
<dbReference type="GeneID" id="67796226"/>
<dbReference type="KEGG" id="pct:PC1_4238"/>
<dbReference type="eggNOG" id="COG1869">
    <property type="taxonomic scope" value="Bacteria"/>
</dbReference>
<dbReference type="HOGENOM" id="CLU_135498_0_0_6"/>
<dbReference type="OrthoDB" id="9805009at2"/>
<dbReference type="UniPathway" id="UPA00916">
    <property type="reaction ID" value="UER00888"/>
</dbReference>
<dbReference type="Proteomes" id="UP000002736">
    <property type="component" value="Chromosome"/>
</dbReference>
<dbReference type="GO" id="GO:0005829">
    <property type="term" value="C:cytosol"/>
    <property type="evidence" value="ECO:0007669"/>
    <property type="project" value="TreeGrafter"/>
</dbReference>
<dbReference type="GO" id="GO:0062193">
    <property type="term" value="F:D-ribose pyranase activity"/>
    <property type="evidence" value="ECO:0007669"/>
    <property type="project" value="UniProtKB-EC"/>
</dbReference>
<dbReference type="GO" id="GO:0016872">
    <property type="term" value="F:intramolecular lyase activity"/>
    <property type="evidence" value="ECO:0007669"/>
    <property type="project" value="UniProtKB-UniRule"/>
</dbReference>
<dbReference type="GO" id="GO:0048029">
    <property type="term" value="F:monosaccharide binding"/>
    <property type="evidence" value="ECO:0007669"/>
    <property type="project" value="InterPro"/>
</dbReference>
<dbReference type="GO" id="GO:0019303">
    <property type="term" value="P:D-ribose catabolic process"/>
    <property type="evidence" value="ECO:0007669"/>
    <property type="project" value="UniProtKB-UniRule"/>
</dbReference>
<dbReference type="FunFam" id="3.40.1650.10:FF:000002">
    <property type="entry name" value="D-ribose pyranase"/>
    <property type="match status" value="1"/>
</dbReference>
<dbReference type="Gene3D" id="3.40.1650.10">
    <property type="entry name" value="RbsD-like domain"/>
    <property type="match status" value="1"/>
</dbReference>
<dbReference type="HAMAP" id="MF_01661">
    <property type="entry name" value="D_rib_pyranase"/>
    <property type="match status" value="1"/>
</dbReference>
<dbReference type="InterPro" id="IPR023064">
    <property type="entry name" value="D-ribose_pyranase"/>
</dbReference>
<dbReference type="InterPro" id="IPR023750">
    <property type="entry name" value="RbsD-like_sf"/>
</dbReference>
<dbReference type="InterPro" id="IPR007721">
    <property type="entry name" value="RbsD_FucU"/>
</dbReference>
<dbReference type="NCBIfam" id="NF008761">
    <property type="entry name" value="PRK11797.1"/>
    <property type="match status" value="1"/>
</dbReference>
<dbReference type="PANTHER" id="PTHR37831">
    <property type="entry name" value="D-RIBOSE PYRANASE"/>
    <property type="match status" value="1"/>
</dbReference>
<dbReference type="PANTHER" id="PTHR37831:SF1">
    <property type="entry name" value="D-RIBOSE PYRANASE"/>
    <property type="match status" value="1"/>
</dbReference>
<dbReference type="Pfam" id="PF05025">
    <property type="entry name" value="RbsD_FucU"/>
    <property type="match status" value="1"/>
</dbReference>
<dbReference type="SUPFAM" id="SSF102546">
    <property type="entry name" value="RbsD-like"/>
    <property type="match status" value="1"/>
</dbReference>
<organism>
    <name type="scientific">Pectobacterium carotovorum subsp. carotovorum (strain PC1)</name>
    <dbReference type="NCBI Taxonomy" id="561230"/>
    <lineage>
        <taxon>Bacteria</taxon>
        <taxon>Pseudomonadati</taxon>
        <taxon>Pseudomonadota</taxon>
        <taxon>Gammaproteobacteria</taxon>
        <taxon>Enterobacterales</taxon>
        <taxon>Pectobacteriaceae</taxon>
        <taxon>Pectobacterium</taxon>
    </lineage>
</organism>
<proteinExistence type="inferred from homology"/>
<evidence type="ECO:0000255" key="1">
    <source>
        <dbReference type="HAMAP-Rule" id="MF_01661"/>
    </source>
</evidence>
<name>RBSD_PECCP</name>
<reference key="1">
    <citation type="submission" date="2009-07" db="EMBL/GenBank/DDBJ databases">
        <title>Complete sequence of Pectobacterium carotovorum subsp. carotovorum PC1.</title>
        <authorList>
            <consortium name="US DOE Joint Genome Institute"/>
            <person name="Lucas S."/>
            <person name="Copeland A."/>
            <person name="Lapidus A."/>
            <person name="Glavina del Rio T."/>
            <person name="Tice H."/>
            <person name="Bruce D."/>
            <person name="Goodwin L."/>
            <person name="Pitluck S."/>
            <person name="Munk A.C."/>
            <person name="Brettin T."/>
            <person name="Detter J.C."/>
            <person name="Han C."/>
            <person name="Tapia R."/>
            <person name="Larimer F."/>
            <person name="Land M."/>
            <person name="Hauser L."/>
            <person name="Kyrpides N."/>
            <person name="Mikhailova N."/>
            <person name="Balakrishnan V."/>
            <person name="Glasner J."/>
            <person name="Perna N.T."/>
        </authorList>
    </citation>
    <scope>NUCLEOTIDE SEQUENCE [LARGE SCALE GENOMIC DNA]</scope>
    <source>
        <strain>PC1</strain>
    </source>
</reference>
<accession>C6DJF3</accession>
<gene>
    <name evidence="1" type="primary">rbsD</name>
    <name type="ordered locus">PC1_4238</name>
</gene>
<feature type="chain" id="PRO_1000215868" description="D-ribose pyranase">
    <location>
        <begin position="1"/>
        <end position="139"/>
    </location>
</feature>
<feature type="active site" description="Proton donor" evidence="1">
    <location>
        <position position="20"/>
    </location>
</feature>
<feature type="binding site" evidence="1">
    <location>
        <position position="28"/>
    </location>
    <ligand>
        <name>substrate</name>
    </ligand>
</feature>
<feature type="binding site" evidence="1">
    <location>
        <position position="106"/>
    </location>
    <ligand>
        <name>substrate</name>
    </ligand>
</feature>
<feature type="binding site" evidence="1">
    <location>
        <begin position="128"/>
        <end position="130"/>
    </location>
    <ligand>
        <name>substrate</name>
    </ligand>
</feature>
<sequence>MKKAALLNSDISSVVSRLGHTDSLVIGDAGLPIPETTTRIDLALTHNVPTFLQVVSVVTSEMQVEAAILAEEIIEKNPAVHDALLDQLKQLEQHQGNSIALHYVSHEEFKTQSGKSRAIIRSGECSPYANVILCAGVTF</sequence>
<comment type="function">
    <text evidence="1">Catalyzes the interconversion of beta-pyran and beta-furan forms of D-ribose.</text>
</comment>
<comment type="catalytic activity">
    <reaction evidence="1">
        <text>beta-D-ribopyranose = beta-D-ribofuranose</text>
        <dbReference type="Rhea" id="RHEA:25432"/>
        <dbReference type="ChEBI" id="CHEBI:27476"/>
        <dbReference type="ChEBI" id="CHEBI:47002"/>
        <dbReference type="EC" id="5.4.99.62"/>
    </reaction>
</comment>
<comment type="pathway">
    <text evidence="1">Carbohydrate metabolism; D-ribose degradation; D-ribose 5-phosphate from beta-D-ribopyranose: step 1/2.</text>
</comment>
<comment type="subunit">
    <text evidence="1">Homodecamer.</text>
</comment>
<comment type="subcellular location">
    <subcellularLocation>
        <location evidence="1">Cytoplasm</location>
    </subcellularLocation>
</comment>
<comment type="similarity">
    <text evidence="1">Belongs to the RbsD / FucU family. RbsD subfamily.</text>
</comment>
<keyword id="KW-0119">Carbohydrate metabolism</keyword>
<keyword id="KW-0963">Cytoplasm</keyword>
<keyword id="KW-0413">Isomerase</keyword>